<name>MGRB_SHIDS</name>
<comment type="function">
    <text evidence="1">PhoP-regulated transcription is redox-sensitive, being activated when the periplasm becomes more reducing. MgrB acts between DsbA/DsbB and PhoP/PhoQ in this pathway. Represses PhoP/PhoQ signaling, possibly by binding to the periplasmic domain of PhoQ, altering its activity and that of downstream effector PhoP.</text>
</comment>
<comment type="subunit">
    <text evidence="1">May form homooligomers. Probably interacts with the periplasmic domain of PhoQ.</text>
</comment>
<comment type="subcellular location">
    <subcellularLocation>
        <location evidence="1">Cell inner membrane</location>
        <topology evidence="1">Single-pass membrane protein</topology>
    </subcellularLocation>
</comment>
<comment type="similarity">
    <text evidence="1">Belongs to the MgrB family.</text>
</comment>
<feature type="chain" id="PRO_0000330682" description="PhoP/PhoQ regulator MgrB">
    <location>
        <begin position="1"/>
        <end position="47"/>
    </location>
</feature>
<feature type="transmembrane region" description="Helical" evidence="1">
    <location>
        <begin position="6"/>
        <end position="26"/>
    </location>
</feature>
<evidence type="ECO:0000255" key="1">
    <source>
        <dbReference type="HAMAP-Rule" id="MF_01596"/>
    </source>
</evidence>
<protein>
    <recommendedName>
        <fullName evidence="1">PhoP/PhoQ regulator MgrB</fullName>
    </recommendedName>
</protein>
<keyword id="KW-0997">Cell inner membrane</keyword>
<keyword id="KW-1003">Cell membrane</keyword>
<keyword id="KW-0472">Membrane</keyword>
<keyword id="KW-1185">Reference proteome</keyword>
<keyword id="KW-0812">Transmembrane</keyword>
<keyword id="KW-1133">Transmembrane helix</keyword>
<accession>Q32F32</accession>
<sequence>MKKFRWVVLVVVVLACLLLWAQVFNMMCDQDVQFFSGICAINQFIPW</sequence>
<proteinExistence type="inferred from homology"/>
<organism>
    <name type="scientific">Shigella dysenteriae serotype 1 (strain Sd197)</name>
    <dbReference type="NCBI Taxonomy" id="300267"/>
    <lineage>
        <taxon>Bacteria</taxon>
        <taxon>Pseudomonadati</taxon>
        <taxon>Pseudomonadota</taxon>
        <taxon>Gammaproteobacteria</taxon>
        <taxon>Enterobacterales</taxon>
        <taxon>Enterobacteriaceae</taxon>
        <taxon>Shigella</taxon>
    </lineage>
</organism>
<reference key="1">
    <citation type="journal article" date="2005" name="Nucleic Acids Res.">
        <title>Genome dynamics and diversity of Shigella species, the etiologic agents of bacillary dysentery.</title>
        <authorList>
            <person name="Yang F."/>
            <person name="Yang J."/>
            <person name="Zhang X."/>
            <person name="Chen L."/>
            <person name="Jiang Y."/>
            <person name="Yan Y."/>
            <person name="Tang X."/>
            <person name="Wang J."/>
            <person name="Xiong Z."/>
            <person name="Dong J."/>
            <person name="Xue Y."/>
            <person name="Zhu Y."/>
            <person name="Xu X."/>
            <person name="Sun L."/>
            <person name="Chen S."/>
            <person name="Nie H."/>
            <person name="Peng J."/>
            <person name="Xu J."/>
            <person name="Wang Y."/>
            <person name="Yuan Z."/>
            <person name="Wen Y."/>
            <person name="Yao Z."/>
            <person name="Shen Y."/>
            <person name="Qiang B."/>
            <person name="Hou Y."/>
            <person name="Yu J."/>
            <person name="Jin Q."/>
        </authorList>
    </citation>
    <scope>NUCLEOTIDE SEQUENCE [LARGE SCALE GENOMIC DNA]</scope>
    <source>
        <strain>Sd197</strain>
    </source>
</reference>
<gene>
    <name evidence="1" type="primary">mgrB</name>
    <name type="ordered locus">SDY_1973</name>
</gene>
<dbReference type="EMBL" id="CP000034">
    <property type="protein sequence ID" value="ABB62073.1"/>
    <property type="molecule type" value="Genomic_DNA"/>
</dbReference>
<dbReference type="RefSeq" id="WP_000714550.1">
    <property type="nucleotide sequence ID" value="NC_007606.1"/>
</dbReference>
<dbReference type="RefSeq" id="YP_403564.1">
    <property type="nucleotide sequence ID" value="NC_007606.1"/>
</dbReference>
<dbReference type="SMR" id="Q32F32"/>
<dbReference type="STRING" id="300267.SDY_1973"/>
<dbReference type="EnsemblBacteria" id="ABB62073">
    <property type="protein sequence ID" value="ABB62073"/>
    <property type="gene ID" value="SDY_1973"/>
</dbReference>
<dbReference type="GeneID" id="93776075"/>
<dbReference type="KEGG" id="sdy:SDY_1973"/>
<dbReference type="PATRIC" id="fig|300267.13.peg.2382"/>
<dbReference type="HOGENOM" id="CLU_208030_1_0_6"/>
<dbReference type="Proteomes" id="UP000002716">
    <property type="component" value="Chromosome"/>
</dbReference>
<dbReference type="GO" id="GO:0005886">
    <property type="term" value="C:plasma membrane"/>
    <property type="evidence" value="ECO:0007669"/>
    <property type="project" value="UniProtKB-SubCell"/>
</dbReference>
<dbReference type="GO" id="GO:0070298">
    <property type="term" value="P:negative regulation of phosphorelay signal transduction system"/>
    <property type="evidence" value="ECO:0007669"/>
    <property type="project" value="UniProtKB-UniRule"/>
</dbReference>
<dbReference type="HAMAP" id="MF_01596">
    <property type="entry name" value="MgrB"/>
    <property type="match status" value="1"/>
</dbReference>
<dbReference type="InterPro" id="IPR020907">
    <property type="entry name" value="MgrB"/>
</dbReference>
<dbReference type="NCBIfam" id="NF007635">
    <property type="entry name" value="PRK10299.1"/>
    <property type="match status" value="1"/>
</dbReference>
<dbReference type="Pfam" id="PF13998">
    <property type="entry name" value="MgrB"/>
    <property type="match status" value="1"/>
</dbReference>
<dbReference type="PROSITE" id="PS51257">
    <property type="entry name" value="PROKAR_LIPOPROTEIN"/>
    <property type="match status" value="1"/>
</dbReference>